<feature type="initiator methionine" description="Removed" evidence="1">
    <location>
        <position position="1"/>
    </location>
</feature>
<feature type="chain" id="PRO_0000118804" description="NADH dehydrogenase [ubiquinone] 1 alpha subcomplex subunit 13">
    <location>
        <begin position="2"/>
        <end position="144"/>
    </location>
</feature>
<feature type="transmembrane region" description="Helical" evidence="2">
    <location>
        <begin position="30"/>
        <end position="51"/>
    </location>
</feature>
<feature type="region of interest" description="Important for inducing cell death">
    <location>
        <begin position="102"/>
        <end position="144"/>
    </location>
</feature>
<feature type="modified residue" description="N-acetylalanine" evidence="1">
    <location>
        <position position="2"/>
    </location>
</feature>
<feature type="splice variant" id="VSP_056644" description="In isoform 2." evidence="14">
    <original>YT</original>
    <variation>ALELQPPLADMGRAELSSNATTSLVQRRKQAWGRQSWLEQIWNAGPVCQRLHRGGSRPGAGAAGGLSLWAAAARGAVRSC</variation>
    <location>
        <begin position="143"/>
        <end position="144"/>
    </location>
</feature>
<feature type="sequence variant" id="VAR_045984" description="In a Hurthle cell variant of papillary carcinoma sample; dbSNP:rs137852869." evidence="11">
    <original>K</original>
    <variation>N</variation>
    <location>
        <position position="5"/>
    </location>
</feature>
<feature type="sequence variant" id="VAR_078938" description="In MC1DN28; reduced NDUFA13 protein level resulting in complex I instability; dbSNP:rs752513525." evidence="12">
    <original>R</original>
    <variation>H</variation>
    <location>
        <position position="57"/>
    </location>
</feature>
<feature type="sequence variant" id="VAR_045985" description="In a Hurthle cell variant of papillary carcinoma sample." evidence="11">
    <original>R</original>
    <variation>P</variation>
    <location>
        <position position="115"/>
    </location>
</feature>
<feature type="sequence conflict" description="In Ref. 3." evidence="15" ref="3">
    <original>A</original>
    <variation>P</variation>
    <location>
        <position position="2"/>
    </location>
</feature>
<proteinExistence type="evidence at protein level"/>
<dbReference type="EMBL" id="AF286697">
    <property type="protein sequence ID" value="AAG28167.1"/>
    <property type="molecule type" value="mRNA"/>
</dbReference>
<dbReference type="EMBL" id="AF155662">
    <property type="protein sequence ID" value="AAF67481.1"/>
    <property type="molecule type" value="mRNA"/>
</dbReference>
<dbReference type="EMBL" id="AF132973">
    <property type="protein sequence ID" value="AAD27748.1"/>
    <property type="status" value="ALT_INIT"/>
    <property type="molecule type" value="mRNA"/>
</dbReference>
<dbReference type="EMBL" id="AF261134">
    <property type="protein sequence ID" value="AAG44670.1"/>
    <property type="status" value="ALT_INIT"/>
    <property type="molecule type" value="mRNA"/>
</dbReference>
<dbReference type="EMBL" id="AK293965">
    <property type="protein sequence ID" value="BAG57337.1"/>
    <property type="molecule type" value="mRNA"/>
</dbReference>
<dbReference type="EMBL" id="AC011448">
    <property type="status" value="NOT_ANNOTATED_CDS"/>
    <property type="molecule type" value="Genomic_DNA"/>
</dbReference>
<dbReference type="EMBL" id="BC000589">
    <property type="protein sequence ID" value="AAH00589.2"/>
    <property type="status" value="ALT_INIT"/>
    <property type="molecule type" value="mRNA"/>
</dbReference>
<dbReference type="EMBL" id="BC009189">
    <property type="protein sequence ID" value="AAH09189.1"/>
    <property type="molecule type" value="mRNA"/>
</dbReference>
<dbReference type="CCDS" id="CCDS12404.2">
    <molecule id="Q9P0J0-1"/>
</dbReference>
<dbReference type="RefSeq" id="NP_057049.5">
    <molecule id="Q9P0J0-1"/>
    <property type="nucleotide sequence ID" value="NM_015965.6"/>
</dbReference>
<dbReference type="PDB" id="5XTB">
    <property type="method" value="EM"/>
    <property type="resolution" value="3.40 A"/>
    <property type="chains" value="W=7-28"/>
</dbReference>
<dbReference type="PDB" id="5XTC">
    <property type="method" value="EM"/>
    <property type="resolution" value="3.70 A"/>
    <property type="chains" value="W=29-144"/>
</dbReference>
<dbReference type="PDB" id="5XTD">
    <property type="method" value="EM"/>
    <property type="resolution" value="3.70 A"/>
    <property type="chains" value="W=7-144"/>
</dbReference>
<dbReference type="PDB" id="5XTH">
    <property type="method" value="EM"/>
    <property type="resolution" value="3.90 A"/>
    <property type="chains" value="W=7-144"/>
</dbReference>
<dbReference type="PDB" id="5XTI">
    <property type="method" value="EM"/>
    <property type="resolution" value="17.40 A"/>
    <property type="chains" value="BW/W=7-144"/>
</dbReference>
<dbReference type="PDBsum" id="5XTB"/>
<dbReference type="PDBsum" id="5XTC"/>
<dbReference type="PDBsum" id="5XTD"/>
<dbReference type="PDBsum" id="5XTH"/>
<dbReference type="PDBsum" id="5XTI"/>
<dbReference type="SMR" id="Q9P0J0"/>
<dbReference type="BioGRID" id="119270">
    <property type="interactions" value="163"/>
</dbReference>
<dbReference type="ComplexPortal" id="CPX-577">
    <property type="entry name" value="Mitochondrial respiratory chain complex I"/>
</dbReference>
<dbReference type="CORUM" id="Q9P0J0"/>
<dbReference type="DIP" id="DIP-31180N"/>
<dbReference type="FunCoup" id="Q9P0J0">
    <property type="interactions" value="2355"/>
</dbReference>
<dbReference type="IntAct" id="Q9P0J0">
    <property type="interactions" value="112"/>
</dbReference>
<dbReference type="MINT" id="Q9P0J0"/>
<dbReference type="STRING" id="9606.ENSP00000423673"/>
<dbReference type="BindingDB" id="Q9P0J0"/>
<dbReference type="ChEMBL" id="CHEMBL4105781"/>
<dbReference type="DrugBank" id="DB18773">
    <property type="generic name" value="Flurpiridaz F-18"/>
</dbReference>
<dbReference type="DrugBank" id="DB00157">
    <property type="generic name" value="NADH"/>
</dbReference>
<dbReference type="DrugCentral" id="Q9P0J0"/>
<dbReference type="iPTMnet" id="Q9P0J0"/>
<dbReference type="PhosphoSitePlus" id="Q9P0J0"/>
<dbReference type="SwissPalm" id="Q9P0J0"/>
<dbReference type="BioMuta" id="NDUFA13"/>
<dbReference type="DMDM" id="20139242"/>
<dbReference type="jPOST" id="Q9P0J0"/>
<dbReference type="MassIVE" id="Q9P0J0"/>
<dbReference type="PaxDb" id="9606-ENSP00000423673"/>
<dbReference type="PeptideAtlas" id="Q9P0J0"/>
<dbReference type="ProteomicsDB" id="83552">
    <molecule id="Q9P0J0-1"/>
</dbReference>
<dbReference type="Pumba" id="Q9P0J0"/>
<dbReference type="TopDownProteomics" id="Q9P0J0-1">
    <molecule id="Q9P0J0-1"/>
</dbReference>
<dbReference type="Antibodypedia" id="28492">
    <property type="antibodies" value="291 antibodies from 37 providers"/>
</dbReference>
<dbReference type="DNASU" id="51079"/>
<dbReference type="Ensembl" id="ENST00000507754.9">
    <molecule id="Q9P0J0-1"/>
    <property type="protein sequence ID" value="ENSP00000423673.1"/>
    <property type="gene ID" value="ENSG00000186010.19"/>
</dbReference>
<dbReference type="GeneID" id="51079"/>
<dbReference type="KEGG" id="hsa:51079"/>
<dbReference type="MANE-Select" id="ENST00000507754.9">
    <property type="protein sequence ID" value="ENSP00000423673.1"/>
    <property type="RefSeq nucleotide sequence ID" value="NM_015965.7"/>
    <property type="RefSeq protein sequence ID" value="NP_057049.5"/>
</dbReference>
<dbReference type="UCSC" id="uc021uqu.2">
    <molecule id="Q9P0J0-1"/>
    <property type="organism name" value="human"/>
</dbReference>
<dbReference type="AGR" id="HGNC:17194"/>
<dbReference type="CTD" id="51079"/>
<dbReference type="DisGeNET" id="51079"/>
<dbReference type="GeneCards" id="NDUFA13"/>
<dbReference type="HGNC" id="HGNC:17194">
    <property type="gene designation" value="NDUFA13"/>
</dbReference>
<dbReference type="HPA" id="ENSG00000186010">
    <property type="expression patterns" value="Low tissue specificity"/>
</dbReference>
<dbReference type="MalaCards" id="NDUFA13"/>
<dbReference type="MIM" id="607464">
    <property type="type" value="phenotype"/>
</dbReference>
<dbReference type="MIM" id="609435">
    <property type="type" value="gene"/>
</dbReference>
<dbReference type="MIM" id="618249">
    <property type="type" value="phenotype"/>
</dbReference>
<dbReference type="neXtProt" id="NX_Q9P0J0"/>
<dbReference type="OpenTargets" id="ENSG00000186010"/>
<dbReference type="Orphanet" id="146">
    <property type="disease" value="Differentiated thyroid carcinoma"/>
</dbReference>
<dbReference type="PharmGKB" id="PA142671270"/>
<dbReference type="VEuPathDB" id="HostDB:ENSG00000186010"/>
<dbReference type="eggNOG" id="KOG3300">
    <property type="taxonomic scope" value="Eukaryota"/>
</dbReference>
<dbReference type="GeneTree" id="ENSGT00390000000719"/>
<dbReference type="HOGENOM" id="CLU_119720_0_0_1"/>
<dbReference type="InParanoid" id="Q9P0J0"/>
<dbReference type="OrthoDB" id="3308at2759"/>
<dbReference type="PAN-GO" id="Q9P0J0">
    <property type="GO annotations" value="1 GO annotation based on evolutionary models"/>
</dbReference>
<dbReference type="PhylomeDB" id="Q9P0J0"/>
<dbReference type="TreeFam" id="TF315182"/>
<dbReference type="BioCyc" id="MetaCyc:HS05364-MONOMER"/>
<dbReference type="PathwayCommons" id="Q9P0J0"/>
<dbReference type="Reactome" id="R-HSA-611105">
    <property type="pathway name" value="Respiratory electron transport"/>
</dbReference>
<dbReference type="Reactome" id="R-HSA-6799198">
    <property type="pathway name" value="Complex I biogenesis"/>
</dbReference>
<dbReference type="Reactome" id="R-HSA-9837999">
    <property type="pathway name" value="Mitochondrial protein degradation"/>
</dbReference>
<dbReference type="SignaLink" id="Q9P0J0"/>
<dbReference type="SIGNOR" id="Q9P0J0"/>
<dbReference type="BioGRID-ORCS" id="51079">
    <property type="hits" value="225 hits in 1162 CRISPR screens"/>
</dbReference>
<dbReference type="ChiTaRS" id="NDUFA13">
    <property type="organism name" value="human"/>
</dbReference>
<dbReference type="GeneWiki" id="NDUFA13"/>
<dbReference type="GenomeRNAi" id="51079"/>
<dbReference type="Pharos" id="Q9P0J0">
    <property type="development level" value="Tclin"/>
</dbReference>
<dbReference type="PRO" id="PR:Q9P0J0"/>
<dbReference type="Proteomes" id="UP000005640">
    <property type="component" value="Chromosome 19"/>
</dbReference>
<dbReference type="RNAct" id="Q9P0J0">
    <property type="molecule type" value="protein"/>
</dbReference>
<dbReference type="Bgee" id="ENSG00000186010">
    <property type="expression patterns" value="Expressed in apex of heart and 99 other cell types or tissues"/>
</dbReference>
<dbReference type="ExpressionAtlas" id="Q9P0J0">
    <property type="expression patterns" value="baseline and differential"/>
</dbReference>
<dbReference type="GO" id="GO:0005737">
    <property type="term" value="C:cytoplasm"/>
    <property type="evidence" value="ECO:0000314"/>
    <property type="project" value="UniProtKB"/>
</dbReference>
<dbReference type="GO" id="GO:0005743">
    <property type="term" value="C:mitochondrial inner membrane"/>
    <property type="evidence" value="ECO:0000314"/>
    <property type="project" value="ComplexPortal"/>
</dbReference>
<dbReference type="GO" id="GO:0031966">
    <property type="term" value="C:mitochondrial membrane"/>
    <property type="evidence" value="ECO:0000314"/>
    <property type="project" value="UniProtKB"/>
</dbReference>
<dbReference type="GO" id="GO:0005739">
    <property type="term" value="C:mitochondrion"/>
    <property type="evidence" value="ECO:0000314"/>
    <property type="project" value="HPA"/>
</dbReference>
<dbReference type="GO" id="GO:0005654">
    <property type="term" value="C:nucleoplasm"/>
    <property type="evidence" value="ECO:0000314"/>
    <property type="project" value="UniProtKB"/>
</dbReference>
<dbReference type="GO" id="GO:0098803">
    <property type="term" value="C:respiratory chain complex"/>
    <property type="evidence" value="ECO:0000314"/>
    <property type="project" value="UniProtKB"/>
</dbReference>
<dbReference type="GO" id="GO:0045271">
    <property type="term" value="C:respiratory chain complex I"/>
    <property type="evidence" value="ECO:0000314"/>
    <property type="project" value="UniProtKB"/>
</dbReference>
<dbReference type="GO" id="GO:0005524">
    <property type="term" value="F:ATP binding"/>
    <property type="evidence" value="ECO:0000303"/>
    <property type="project" value="UniProtKB"/>
</dbReference>
<dbReference type="GO" id="GO:0061133">
    <property type="term" value="F:endopeptidase activator activity"/>
    <property type="evidence" value="ECO:0000305"/>
    <property type="project" value="ParkinsonsUK-UCL"/>
</dbReference>
<dbReference type="GO" id="GO:0009060">
    <property type="term" value="P:aerobic respiration"/>
    <property type="evidence" value="ECO:0000303"/>
    <property type="project" value="ComplexPortal"/>
</dbReference>
<dbReference type="GO" id="GO:0035458">
    <property type="term" value="P:cellular response to interferon-beta"/>
    <property type="evidence" value="ECO:0000314"/>
    <property type="project" value="ParkinsonsUK-UCL"/>
</dbReference>
<dbReference type="GO" id="GO:0071300">
    <property type="term" value="P:cellular response to retinoic acid"/>
    <property type="evidence" value="ECO:0000314"/>
    <property type="project" value="ParkinsonsUK-UCL"/>
</dbReference>
<dbReference type="GO" id="GO:0097191">
    <property type="term" value="P:extrinsic apoptotic signaling pathway"/>
    <property type="evidence" value="ECO:0007669"/>
    <property type="project" value="Ensembl"/>
</dbReference>
<dbReference type="GO" id="GO:0032981">
    <property type="term" value="P:mitochondrial respiratory chain complex I assembly"/>
    <property type="evidence" value="ECO:0000315"/>
    <property type="project" value="UniProtKB"/>
</dbReference>
<dbReference type="GO" id="GO:0045892">
    <property type="term" value="P:negative regulation of DNA-templated transcription"/>
    <property type="evidence" value="ECO:0000314"/>
    <property type="project" value="UniProtKB"/>
</dbReference>
<dbReference type="GO" id="GO:1900119">
    <property type="term" value="P:positive regulation of execution phase of apoptosis"/>
    <property type="evidence" value="ECO:0000316"/>
    <property type="project" value="ParkinsonsUK-UCL"/>
</dbReference>
<dbReference type="GO" id="GO:0045732">
    <property type="term" value="P:positive regulation of protein catabolic process"/>
    <property type="evidence" value="ECO:0000316"/>
    <property type="project" value="ParkinsonsUK-UCL"/>
</dbReference>
<dbReference type="GO" id="GO:0045039">
    <property type="term" value="P:protein insertion into mitochondrial inner membrane"/>
    <property type="evidence" value="ECO:0000314"/>
    <property type="project" value="UniProtKB"/>
</dbReference>
<dbReference type="GO" id="GO:0042776">
    <property type="term" value="P:proton motive force-driven mitochondrial ATP synthesis"/>
    <property type="evidence" value="ECO:0000303"/>
    <property type="project" value="ComplexPortal"/>
</dbReference>
<dbReference type="InterPro" id="IPR009346">
    <property type="entry name" value="GRIM-19"/>
</dbReference>
<dbReference type="PANTHER" id="PTHR12966:SF0">
    <property type="entry name" value="NADH DEHYDROGENASE [UBIQUINONE] 1 ALPHA SUBCOMPLEX SUBUNIT 13"/>
    <property type="match status" value="1"/>
</dbReference>
<dbReference type="PANTHER" id="PTHR12966">
    <property type="entry name" value="NADH DEHYDROGENASE UBIQUINONE 1 ALPHA SUBCOMPLEX SUBUNIT 13"/>
    <property type="match status" value="1"/>
</dbReference>
<dbReference type="Pfam" id="PF06212">
    <property type="entry name" value="GRIM-19"/>
    <property type="match status" value="1"/>
</dbReference>
<accession>Q9P0J0</accession>
<accession>B4DF76</accession>
<accession>K7EK58</accession>
<accession>Q6PKI0</accession>
<accession>Q9H2L3</accession>
<accession>Q9Y327</accession>
<keyword id="KW-0002">3D-structure</keyword>
<keyword id="KW-0007">Acetylation</keyword>
<keyword id="KW-0025">Alternative splicing</keyword>
<keyword id="KW-0053">Apoptosis</keyword>
<keyword id="KW-0225">Disease variant</keyword>
<keyword id="KW-0249">Electron transport</keyword>
<keyword id="KW-0945">Host-virus interaction</keyword>
<keyword id="KW-0472">Membrane</keyword>
<keyword id="KW-0496">Mitochondrion</keyword>
<keyword id="KW-0999">Mitochondrion inner membrane</keyword>
<keyword id="KW-0539">Nucleus</keyword>
<keyword id="KW-1274">Primary mitochondrial disease</keyword>
<keyword id="KW-1267">Proteomics identification</keyword>
<keyword id="KW-1185">Reference proteome</keyword>
<keyword id="KW-0679">Respiratory chain</keyword>
<keyword id="KW-0812">Transmembrane</keyword>
<keyword id="KW-1133">Transmembrane helix</keyword>
<keyword id="KW-0813">Transport</keyword>
<organism>
    <name type="scientific">Homo sapiens</name>
    <name type="common">Human</name>
    <dbReference type="NCBI Taxonomy" id="9606"/>
    <lineage>
        <taxon>Eukaryota</taxon>
        <taxon>Metazoa</taxon>
        <taxon>Chordata</taxon>
        <taxon>Craniata</taxon>
        <taxon>Vertebrata</taxon>
        <taxon>Euteleostomi</taxon>
        <taxon>Mammalia</taxon>
        <taxon>Eutheria</taxon>
        <taxon>Euarchontoglires</taxon>
        <taxon>Primates</taxon>
        <taxon>Haplorrhini</taxon>
        <taxon>Catarrhini</taxon>
        <taxon>Hominidae</taxon>
        <taxon>Homo</taxon>
    </lineage>
</organism>
<sequence length="144" mass="16698">MAASKVKQDMPPPGGYGPIDYKRNLPRRGLSGYSMLAIGIGTLIYGHWSIMKWNRERRRLQIEDFEARIALLPLLQAETDRRTLQMLRENLEEEAIIMKDVPDWKVGESVFHTTRWVPPLIGELYGLRTTEEALHASHGFMWYT</sequence>
<gene>
    <name type="primary">NDUFA13</name>
    <name type="synonym">GRIM19</name>
    <name type="ORF">CDA016</name>
    <name type="ORF">CGI-39</name>
</gene>
<evidence type="ECO:0000250" key="1">
    <source>
        <dbReference type="UniProtKB" id="Q95KV7"/>
    </source>
</evidence>
<evidence type="ECO:0000255" key="2"/>
<evidence type="ECO:0000269" key="3">
    <source>
    </source>
</evidence>
<evidence type="ECO:0000269" key="4">
    <source>
    </source>
</evidence>
<evidence type="ECO:0000269" key="5">
    <source>
    </source>
</evidence>
<evidence type="ECO:0000269" key="6">
    <source>
    </source>
</evidence>
<evidence type="ECO:0000269" key="7">
    <source>
    </source>
</evidence>
<evidence type="ECO:0000269" key="8">
    <source>
    </source>
</evidence>
<evidence type="ECO:0000269" key="9">
    <source>
    </source>
</evidence>
<evidence type="ECO:0000269" key="10">
    <source>
    </source>
</evidence>
<evidence type="ECO:0000269" key="11">
    <source>
    </source>
</evidence>
<evidence type="ECO:0000269" key="12">
    <source>
    </source>
</evidence>
<evidence type="ECO:0000269" key="13">
    <source>
    </source>
</evidence>
<evidence type="ECO:0000303" key="14">
    <source>
    </source>
</evidence>
<evidence type="ECO:0000305" key="15"/>
<protein>
    <recommendedName>
        <fullName>NADH dehydrogenase [ubiquinone] 1 alpha subcomplex subunit 13</fullName>
    </recommendedName>
    <alternativeName>
        <fullName>Cell death regulatory protein GRIM-19</fullName>
    </alternativeName>
    <alternativeName>
        <fullName>Complex I-B16.6</fullName>
        <shortName>CI-B16.6</shortName>
    </alternativeName>
    <alternativeName>
        <fullName>Gene associated with retinoic and interferon-induced mortality 19 protein</fullName>
        <shortName>GRIM-19</shortName>
        <shortName>Gene associated with retinoic and IFN-induced mortality 19 protein</shortName>
    </alternativeName>
    <alternativeName>
        <fullName>NADH-ubiquinone oxidoreductase B16.6 subunit</fullName>
    </alternativeName>
</protein>
<reference key="1">
    <citation type="journal article" date="2000" name="J. Biol. Chem.">
        <title>Identification of GRIM-19, a novel cell death-regulatory gene induced by the interferon-beta and retinoic acid combination, using a genetic approach.</title>
        <authorList>
            <person name="Angell J.E."/>
            <person name="Lindner D.J."/>
            <person name="Shapiro P.S."/>
            <person name="Hofmann E.R."/>
            <person name="Kalvakolanu D.V."/>
        </authorList>
    </citation>
    <scope>NUCLEOTIDE SEQUENCE [MRNA] (ISOFORM 1)</scope>
    <scope>TISSUE SPECIFICITY</scope>
    <source>
        <tissue>Mammary carcinoma</tissue>
    </source>
</reference>
<reference key="2">
    <citation type="journal article" date="2000" name="Proc. Natl. Acad. Sci. U.S.A.">
        <title>Gene expression profiling in the human hypothalamus-pituitary-adrenal axis and full-length cDNA cloning.</title>
        <authorList>
            <person name="Hu R.-M."/>
            <person name="Han Z.-G."/>
            <person name="Song H.-D."/>
            <person name="Peng Y.-D."/>
            <person name="Huang Q.-H."/>
            <person name="Ren S.-X."/>
            <person name="Gu Y.-J."/>
            <person name="Huang C.-H."/>
            <person name="Li Y.-B."/>
            <person name="Jiang C.-L."/>
            <person name="Fu G."/>
            <person name="Zhang Q.-H."/>
            <person name="Gu B.-W."/>
            <person name="Dai M."/>
            <person name="Mao Y.-F."/>
            <person name="Gao G.-F."/>
            <person name="Rong R."/>
            <person name="Ye M."/>
            <person name="Zhou J."/>
            <person name="Xu S.-H."/>
            <person name="Gu J."/>
            <person name="Shi J.-X."/>
            <person name="Jin W.-R."/>
            <person name="Zhang C.-K."/>
            <person name="Wu T.-M."/>
            <person name="Huang G.-Y."/>
            <person name="Chen Z."/>
            <person name="Chen M.-D."/>
            <person name="Chen J.-L."/>
        </authorList>
    </citation>
    <scope>NUCLEOTIDE SEQUENCE [LARGE SCALE MRNA] (ISOFORM 1)</scope>
    <source>
        <tissue>Adrenal gland</tissue>
    </source>
</reference>
<reference key="3">
    <citation type="journal article" date="2000" name="Genome Res.">
        <title>Identification of novel human genes evolutionarily conserved in Caenorhabditis elegans by comparative proteomics.</title>
        <authorList>
            <person name="Lai C.-H."/>
            <person name="Chou C.-Y."/>
            <person name="Ch'ang L.-Y."/>
            <person name="Liu C.-S."/>
            <person name="Lin W.-C."/>
        </authorList>
    </citation>
    <scope>NUCLEOTIDE SEQUENCE [LARGE SCALE MRNA] (ISOFORM 1)</scope>
</reference>
<reference key="4">
    <citation type="submission" date="2000-05" db="EMBL/GenBank/DDBJ databases">
        <title>A novel gene expressed in human pheochromocytoma.</title>
        <authorList>
            <person name="Xu X."/>
            <person name="Yang Y."/>
            <person name="Gao G."/>
            <person name="Xiao H."/>
            <person name="Chen Z."/>
            <person name="Han Z."/>
        </authorList>
    </citation>
    <scope>NUCLEOTIDE SEQUENCE [LARGE SCALE MRNA] (ISOFORM 1)</scope>
    <source>
        <tissue>Pheochromocytoma</tissue>
    </source>
</reference>
<reference key="5">
    <citation type="journal article" date="2004" name="Nature">
        <title>The DNA sequence and biology of human chromosome 19.</title>
        <authorList>
            <person name="Grimwood J."/>
            <person name="Gordon L.A."/>
            <person name="Olsen A.S."/>
            <person name="Terry A."/>
            <person name="Schmutz J."/>
            <person name="Lamerdin J.E."/>
            <person name="Hellsten U."/>
            <person name="Goodstein D."/>
            <person name="Couronne O."/>
            <person name="Tran-Gyamfi M."/>
            <person name="Aerts A."/>
            <person name="Altherr M."/>
            <person name="Ashworth L."/>
            <person name="Bajorek E."/>
            <person name="Black S."/>
            <person name="Branscomb E."/>
            <person name="Caenepeel S."/>
            <person name="Carrano A.V."/>
            <person name="Caoile C."/>
            <person name="Chan Y.M."/>
            <person name="Christensen M."/>
            <person name="Cleland C.A."/>
            <person name="Copeland A."/>
            <person name="Dalin E."/>
            <person name="Dehal P."/>
            <person name="Denys M."/>
            <person name="Detter J.C."/>
            <person name="Escobar J."/>
            <person name="Flowers D."/>
            <person name="Fotopulos D."/>
            <person name="Garcia C."/>
            <person name="Georgescu A.M."/>
            <person name="Glavina T."/>
            <person name="Gomez M."/>
            <person name="Gonzales E."/>
            <person name="Groza M."/>
            <person name="Hammon N."/>
            <person name="Hawkins T."/>
            <person name="Haydu L."/>
            <person name="Ho I."/>
            <person name="Huang W."/>
            <person name="Israni S."/>
            <person name="Jett J."/>
            <person name="Kadner K."/>
            <person name="Kimball H."/>
            <person name="Kobayashi A."/>
            <person name="Larionov V."/>
            <person name="Leem S.-H."/>
            <person name="Lopez F."/>
            <person name="Lou Y."/>
            <person name="Lowry S."/>
            <person name="Malfatti S."/>
            <person name="Martinez D."/>
            <person name="McCready P.M."/>
            <person name="Medina C."/>
            <person name="Morgan J."/>
            <person name="Nelson K."/>
            <person name="Nolan M."/>
            <person name="Ovcharenko I."/>
            <person name="Pitluck S."/>
            <person name="Pollard M."/>
            <person name="Popkie A.P."/>
            <person name="Predki P."/>
            <person name="Quan G."/>
            <person name="Ramirez L."/>
            <person name="Rash S."/>
            <person name="Retterer J."/>
            <person name="Rodriguez A."/>
            <person name="Rogers S."/>
            <person name="Salamov A."/>
            <person name="Salazar A."/>
            <person name="She X."/>
            <person name="Smith D."/>
            <person name="Slezak T."/>
            <person name="Solovyev V."/>
            <person name="Thayer N."/>
            <person name="Tice H."/>
            <person name="Tsai M."/>
            <person name="Ustaszewska A."/>
            <person name="Vo N."/>
            <person name="Wagner M."/>
            <person name="Wheeler J."/>
            <person name="Wu K."/>
            <person name="Xie G."/>
            <person name="Yang J."/>
            <person name="Dubchak I."/>
            <person name="Furey T.S."/>
            <person name="DeJong P."/>
            <person name="Dickson M."/>
            <person name="Gordon D."/>
            <person name="Eichler E.E."/>
            <person name="Pennacchio L.A."/>
            <person name="Richardson P."/>
            <person name="Stubbs L."/>
            <person name="Rokhsar D.S."/>
            <person name="Myers R.M."/>
            <person name="Rubin E.M."/>
            <person name="Lucas S.M."/>
        </authorList>
    </citation>
    <scope>NUCLEOTIDE SEQUENCE [LARGE SCALE GENOMIC DNA]</scope>
</reference>
<reference key="6">
    <citation type="journal article" date="2004" name="Nat. Genet.">
        <title>Complete sequencing and characterization of 21,243 full-length human cDNAs.</title>
        <authorList>
            <person name="Ota T."/>
            <person name="Suzuki Y."/>
            <person name="Nishikawa T."/>
            <person name="Otsuki T."/>
            <person name="Sugiyama T."/>
            <person name="Irie R."/>
            <person name="Wakamatsu A."/>
            <person name="Hayashi K."/>
            <person name="Sato H."/>
            <person name="Nagai K."/>
            <person name="Kimura K."/>
            <person name="Makita H."/>
            <person name="Sekine M."/>
            <person name="Obayashi M."/>
            <person name="Nishi T."/>
            <person name="Shibahara T."/>
            <person name="Tanaka T."/>
            <person name="Ishii S."/>
            <person name="Yamamoto J."/>
            <person name="Saito K."/>
            <person name="Kawai Y."/>
            <person name="Isono Y."/>
            <person name="Nakamura Y."/>
            <person name="Nagahari K."/>
            <person name="Murakami K."/>
            <person name="Yasuda T."/>
            <person name="Iwayanagi T."/>
            <person name="Wagatsuma M."/>
            <person name="Shiratori A."/>
            <person name="Sudo H."/>
            <person name="Hosoiri T."/>
            <person name="Kaku Y."/>
            <person name="Kodaira H."/>
            <person name="Kondo H."/>
            <person name="Sugawara M."/>
            <person name="Takahashi M."/>
            <person name="Kanda K."/>
            <person name="Yokoi T."/>
            <person name="Furuya T."/>
            <person name="Kikkawa E."/>
            <person name="Omura Y."/>
            <person name="Abe K."/>
            <person name="Kamihara K."/>
            <person name="Katsuta N."/>
            <person name="Sato K."/>
            <person name="Tanikawa M."/>
            <person name="Yamazaki M."/>
            <person name="Ninomiya K."/>
            <person name="Ishibashi T."/>
            <person name="Yamashita H."/>
            <person name="Murakawa K."/>
            <person name="Fujimori K."/>
            <person name="Tanai H."/>
            <person name="Kimata M."/>
            <person name="Watanabe M."/>
            <person name="Hiraoka S."/>
            <person name="Chiba Y."/>
            <person name="Ishida S."/>
            <person name="Ono Y."/>
            <person name="Takiguchi S."/>
            <person name="Watanabe S."/>
            <person name="Yosida M."/>
            <person name="Hotuta T."/>
            <person name="Kusano J."/>
            <person name="Kanehori K."/>
            <person name="Takahashi-Fujii A."/>
            <person name="Hara H."/>
            <person name="Tanase T.-O."/>
            <person name="Nomura Y."/>
            <person name="Togiya S."/>
            <person name="Komai F."/>
            <person name="Hara R."/>
            <person name="Takeuchi K."/>
            <person name="Arita M."/>
            <person name="Imose N."/>
            <person name="Musashino K."/>
            <person name="Yuuki H."/>
            <person name="Oshima A."/>
            <person name="Sasaki N."/>
            <person name="Aotsuka S."/>
            <person name="Yoshikawa Y."/>
            <person name="Matsunawa H."/>
            <person name="Ichihara T."/>
            <person name="Shiohata N."/>
            <person name="Sano S."/>
            <person name="Moriya S."/>
            <person name="Momiyama H."/>
            <person name="Satoh N."/>
            <person name="Takami S."/>
            <person name="Terashima Y."/>
            <person name="Suzuki O."/>
            <person name="Nakagawa S."/>
            <person name="Senoh A."/>
            <person name="Mizoguchi H."/>
            <person name="Goto Y."/>
            <person name="Shimizu F."/>
            <person name="Wakebe H."/>
            <person name="Hishigaki H."/>
            <person name="Watanabe T."/>
            <person name="Sugiyama A."/>
            <person name="Takemoto M."/>
            <person name="Kawakami B."/>
            <person name="Yamazaki M."/>
            <person name="Watanabe K."/>
            <person name="Kumagai A."/>
            <person name="Itakura S."/>
            <person name="Fukuzumi Y."/>
            <person name="Fujimori Y."/>
            <person name="Komiyama M."/>
            <person name="Tashiro H."/>
            <person name="Tanigami A."/>
            <person name="Fujiwara T."/>
            <person name="Ono T."/>
            <person name="Yamada K."/>
            <person name="Fujii Y."/>
            <person name="Ozaki K."/>
            <person name="Hirao M."/>
            <person name="Ohmori Y."/>
            <person name="Kawabata A."/>
            <person name="Hikiji T."/>
            <person name="Kobatake N."/>
            <person name="Inagaki H."/>
            <person name="Ikema Y."/>
            <person name="Okamoto S."/>
            <person name="Okitani R."/>
            <person name="Kawakami T."/>
            <person name="Noguchi S."/>
            <person name="Itoh T."/>
            <person name="Shigeta K."/>
            <person name="Senba T."/>
            <person name="Matsumura K."/>
            <person name="Nakajima Y."/>
            <person name="Mizuno T."/>
            <person name="Morinaga M."/>
            <person name="Sasaki M."/>
            <person name="Togashi T."/>
            <person name="Oyama M."/>
            <person name="Hata H."/>
            <person name="Watanabe M."/>
            <person name="Komatsu T."/>
            <person name="Mizushima-Sugano J."/>
            <person name="Satoh T."/>
            <person name="Shirai Y."/>
            <person name="Takahashi Y."/>
            <person name="Nakagawa K."/>
            <person name="Okumura K."/>
            <person name="Nagase T."/>
            <person name="Nomura N."/>
            <person name="Kikuchi H."/>
            <person name="Masuho Y."/>
            <person name="Yamashita R."/>
            <person name="Nakai K."/>
            <person name="Yada T."/>
            <person name="Nakamura Y."/>
            <person name="Ohara O."/>
            <person name="Isogai T."/>
            <person name="Sugano S."/>
        </authorList>
    </citation>
    <scope>NUCLEOTIDE SEQUENCE [LARGE SCALE MRNA] (ISOFORM 2)</scope>
    <source>
        <tissue>Cerebellum</tissue>
    </source>
</reference>
<reference key="7">
    <citation type="journal article" date="2004" name="Genome Res.">
        <title>The status, quality, and expansion of the NIH full-length cDNA project: the Mammalian Gene Collection (MGC).</title>
        <authorList>
            <consortium name="The MGC Project Team"/>
        </authorList>
    </citation>
    <scope>NUCLEOTIDE SEQUENCE [LARGE SCALE MRNA] (ISOFORM 1)</scope>
    <source>
        <tissue>Placenta</tissue>
        <tissue>Skin</tissue>
    </source>
</reference>
<reference key="8">
    <citation type="journal article" date="2002" name="J. Virol.">
        <title>Viral interferon regulatory factor 1 of Kaposi's sarcoma-associated herpesvirus interacts with a cell death regulator, GRIM19, and inhibits interferon/retinoic acid-induced cell death.</title>
        <authorList>
            <person name="Seo T."/>
            <person name="Lee D."/>
            <person name="Shim Y.S."/>
            <person name="Angell J.E."/>
            <person name="Chidambaram N.V."/>
            <person name="Kalvakolanu D.V."/>
            <person name="Choe J."/>
        </authorList>
    </citation>
    <scope>INTERACTION WITH HHV-8 IRF1; HPV-16 E6 AND SV40 LT (MICROBIAL INFECTION)</scope>
</reference>
<reference key="9">
    <citation type="journal article" date="2003" name="EMBO J.">
        <title>GRIM-19, a death-regulatory gene product, suppresses Stat3 activity via functional interaction.</title>
        <authorList>
            <person name="Lufei C."/>
            <person name="Ma J."/>
            <person name="Huang G."/>
            <person name="Zhang T."/>
            <person name="Novotny-Diermayr V."/>
            <person name="Ong C.T."/>
            <person name="Cao X."/>
        </authorList>
    </citation>
    <scope>FUNCTION</scope>
    <scope>INTERACTION WITH STAT3</scope>
    <scope>SUBCELLULAR LOCATION</scope>
</reference>
<reference key="10">
    <citation type="journal article" date="2003" name="J. Biol. Chem.">
        <title>The subunit composition of the human NADH dehydrogenase obtained by rapid one-step immunopurification.</title>
        <authorList>
            <person name="Murray J."/>
            <person name="Zhang B."/>
            <person name="Taylor S.W."/>
            <person name="Oglesbee D."/>
            <person name="Fahy E."/>
            <person name="Marusich M.F."/>
            <person name="Ghosh S.S."/>
            <person name="Capaldi R.A."/>
        </authorList>
    </citation>
    <scope>IDENTIFICATION IN THE NADH-UBIQUINONE OXIDOREDUCTASE COMPLEX</scope>
    <scope>IDENTIFICATION BY MASS SPECTROMETRY</scope>
</reference>
<reference key="11">
    <citation type="journal article" date="2003" name="Proc. Natl. Acad. Sci. U.S.A.">
        <title>The cell death regulator GRIM-19 is an inhibitor of signal transducer and activator of transcription 3.</title>
        <authorList>
            <person name="Zhang J."/>
            <person name="Yang J."/>
            <person name="Roy S.K."/>
            <person name="Tininini S."/>
            <person name="Hu J."/>
            <person name="Bromberg J.F."/>
            <person name="Poli V."/>
            <person name="Stark G.R."/>
            <person name="Kalvakolanu D.V."/>
        </authorList>
    </citation>
    <scope>FUNCTION</scope>
    <scope>INTERACTION WITH STAT3</scope>
</reference>
<reference key="12">
    <citation type="journal article" date="2004" name="Mol. Cell. Biol.">
        <title>GRIM-19, a cell death regulatory protein, is essential for assembly and function of mitochondrial complex I.</title>
        <authorList>
            <person name="Huang G."/>
            <person name="Lu H."/>
            <person name="Hao A."/>
            <person name="Ng D.C.H."/>
            <person name="Ponniah S."/>
            <person name="Guo K."/>
            <person name="Lufei C."/>
            <person name="Zeng Q."/>
            <person name="Cao X."/>
        </authorList>
    </citation>
    <scope>SUBCELLULAR LOCATION</scope>
</reference>
<reference key="13">
    <citation type="journal article" date="2004" name="Cancer Res.">
        <title>GW112, a novel antiapoptotic protein that promotes tumor growth.</title>
        <authorList>
            <person name="Zhang X."/>
            <person name="Huang Q."/>
            <person name="Yang Z."/>
            <person name="Li Y."/>
            <person name="Li C.-Y."/>
        </authorList>
    </citation>
    <scope>SUBCELLULAR LOCATION</scope>
    <scope>INTERACTION WITH OLFM4</scope>
</reference>
<reference key="14">
    <citation type="journal article" date="2005" name="J. Biol. Chem.">
        <title>GRIM-19 interacts with nucleotide oligomerization domain 2 and serves as downstream effector of anti-bacterial function in intestinal epithelial cells.</title>
        <authorList>
            <person name="Barnich N."/>
            <person name="Hisamatsu T."/>
            <person name="Aguirre J.E."/>
            <person name="Xavier R."/>
            <person name="Reinecker H.-C."/>
            <person name="Podolsky D.K."/>
        </authorList>
    </citation>
    <scope>FUNCTION</scope>
    <scope>INTERACTION WITH CARD15</scope>
</reference>
<reference key="15">
    <citation type="journal article" date="2011" name="BMC Syst. Biol.">
        <title>Initial characterization of the human central proteome.</title>
        <authorList>
            <person name="Burkard T.R."/>
            <person name="Planyavsky M."/>
            <person name="Kaupe I."/>
            <person name="Breitwieser F.P."/>
            <person name="Buerckstuemmer T."/>
            <person name="Bennett K.L."/>
            <person name="Superti-Furga G."/>
            <person name="Colinge J."/>
        </authorList>
    </citation>
    <scope>IDENTIFICATION BY MASS SPECTROMETRY [LARGE SCALE ANALYSIS]</scope>
</reference>
<reference key="16">
    <citation type="journal article" date="2015" name="Proteomics">
        <title>N-terminome analysis of the human mitochondrial proteome.</title>
        <authorList>
            <person name="Vaca Jacome A.S."/>
            <person name="Rabilloud T."/>
            <person name="Schaeffer-Reiss C."/>
            <person name="Rompais M."/>
            <person name="Ayoub D."/>
            <person name="Lane L."/>
            <person name="Bairoch A."/>
            <person name="Van Dorsselaer A."/>
            <person name="Carapito C."/>
        </authorList>
    </citation>
    <scope>IDENTIFICATION BY MASS SPECTROMETRY [LARGE SCALE ANALYSIS]</scope>
</reference>
<reference key="17">
    <citation type="journal article" date="2016" name="Nature">
        <title>Accessory subunits are integral for assembly and function of human mitochondrial complex I.</title>
        <authorList>
            <person name="Stroud D.A."/>
            <person name="Surgenor E.E."/>
            <person name="Formosa L.E."/>
            <person name="Reljic B."/>
            <person name="Frazier A.E."/>
            <person name="Dibley M.G."/>
            <person name="Osellame L.D."/>
            <person name="Stait T."/>
            <person name="Beilharz T.H."/>
            <person name="Thorburn D.R."/>
            <person name="Salim A."/>
            <person name="Ryan M.T."/>
        </authorList>
    </citation>
    <scope>FUNCTION</scope>
    <scope>IDENTIFICATION IN THE NADH-UBIQUINONE OXIDOREDUCTASE COMPLEX</scope>
</reference>
<reference key="18">
    <citation type="journal article" date="2005" name="Br. J. Cancer">
        <title>Somatic and germline mutation in GRIM-19, a dual function gene involved in mitochondrial metabolism and cell death, is linked to mitochondrion-rich (Hurthle cell) tumours of the thyroid.</title>
        <authorList>
            <person name="Maximo V."/>
            <person name="Botelho T."/>
            <person name="Capela J."/>
            <person name="Soares P."/>
            <person name="Lima J."/>
            <person name="Taveira A."/>
            <person name="Amaro T."/>
            <person name="Barbosa A.P."/>
            <person name="Preto A."/>
            <person name="Harach H.R."/>
            <person name="Williams D."/>
            <person name="Sobrinho-Simoes M."/>
        </authorList>
    </citation>
    <scope>VARIANTS ASN-5 AND PRO-115</scope>
    <scope>INVOLVEMENT IN SUSCEPTIBILITY TO HURTHLE CELL THYROID CARCINOMA</scope>
</reference>
<reference key="19">
    <citation type="journal article" date="2015" name="Hum. Mol. Genet.">
        <title>Mutation in NDUFA13/GRIM19 leads to early onset hypotonia, dyskinesia and sensorial deficiencies, and mitochondrial complex I instability.</title>
        <authorList>
            <person name="Angebault C."/>
            <person name="Charif M."/>
            <person name="Guegen N."/>
            <person name="Piro-Megy C."/>
            <person name="Mousson de Camaret B."/>
            <person name="Procaccio V."/>
            <person name="Guichet P.O."/>
            <person name="Hebrard M."/>
            <person name="Manes G."/>
            <person name="Leboucq N."/>
            <person name="Rivier F."/>
            <person name="Hamel C.P."/>
            <person name="Lenaers G."/>
            <person name="Roubertie A."/>
        </authorList>
    </citation>
    <scope>VARIANT MC1DN28 HIS-57</scope>
    <scope>INVOLVEMENT IN MC1DN28</scope>
    <scope>CHARACTERIZATION OF VARIANT MC1DN28 HIS-57</scope>
</reference>
<name>NDUAD_HUMAN</name>
<comment type="function">
    <text evidence="6 7 10 13">Accessory subunit of the mitochondrial membrane respiratory chain NADH dehydrogenase (Complex I), that is believed not to be involved in catalysis (PubMed:27626371). Complex I functions in the transfer of electrons from NADH to the respiratory chain. The immediate electron acceptor for the enzyme is believed to be ubiquinone (PubMed:27626371). Involved in the interferon/all-trans-retinoic acid (IFN/RA) induced cell death. This apoptotic activity is inhibited by interaction with viral IRF1. Prevents the transactivation of STAT3 target genes. May play a role in CARD15-mediated innate mucosal responses and serve to regulate intestinal epithelial cell responses to microbes (PubMed:15753091).</text>
</comment>
<comment type="subunit">
    <text evidence="4 5 6 7 8 10 13">Complex I is composed of 45 different subunits (PubMed:27626371). Interacts with CARD15, but not with CARD4 (PubMed:12611891, PubMed:15753091). Interacts with STAT3, but not with STAT1, STAT2 and STAT5A (PubMed:12628925, PubMed:12867595). Interacts with OLFM4 (PubMed:15059901).</text>
</comment>
<comment type="subunit">
    <text evidence="4">(Microbial infection) Interacts with HHV-8 IRF1, in the nucleus, with HPV-16 E6 and SV40 LT (PubMed:12163600).</text>
</comment>
<comment type="interaction">
    <interactant intactId="EBI-372742">
        <id>Q9P0J0</id>
    </interactant>
    <interactant intactId="EBI-517086">
        <id>O43464</id>
        <label>HTRA2</label>
    </interactant>
    <organismsDiffer>false</organismsDiffer>
    <experiments>7</experiments>
</comment>
<comment type="interaction">
    <interactant intactId="EBI-372742">
        <id>Q9P0J0</id>
    </interactant>
    <interactant intactId="EBI-466029">
        <id>P42858</id>
        <label>HTT</label>
    </interactant>
    <organismsDiffer>false</organismsDiffer>
    <experiments>4</experiments>
</comment>
<comment type="interaction">
    <interactant intactId="EBI-372742">
        <id>Q9P0J0</id>
    </interactant>
    <interactant intactId="EBI-7445625">
        <id>Q9HC29</id>
        <label>NOD2</label>
    </interactant>
    <organismsDiffer>false</organismsDiffer>
    <experiments>6</experiments>
</comment>
<comment type="subcellular location">
    <subcellularLocation>
        <location evidence="6 8 9">Mitochondrion inner membrane</location>
        <topology evidence="2">Single-pass membrane protein</topology>
        <orientation>Matrix side</orientation>
    </subcellularLocation>
    <subcellularLocation>
        <location evidence="6">Nucleus</location>
    </subcellularLocation>
    <text evidence="6 8">Localizes mainly in the mitochondrion (PubMed:12628925). May be translocated into the nucleus upon IFN/RA treatment.</text>
</comment>
<comment type="alternative products">
    <event type="alternative splicing"/>
    <isoform>
        <id>Q9P0J0-1</id>
        <name>1</name>
        <sequence type="displayed"/>
    </isoform>
    <isoform>
        <id>Q9P0J0-2</id>
        <name>2</name>
        <sequence type="described" ref="VSP_056644"/>
    </isoform>
</comment>
<comment type="tissue specificity">
    <text evidence="3">Widely expressed, with highest expression in heart, skeletal muscle, liver, kidney and placenta. In intestinal mucosa, down-regulated in areas involved in Crohn disease and ulcerative colitis.</text>
</comment>
<comment type="developmental stage">
    <text>Expressed in numerous fetal tissues.</text>
</comment>
<comment type="induction">
    <text>By IFNB1/IFN-beta combined with all-trans-retinoic acid (ATRA).</text>
</comment>
<comment type="disease" evidence="11">
    <disease id="DI-02876">
        <name>Hurthle cell thyroid carcinoma</name>
        <acronym>HCTC</acronym>
        <description>A rare type of thyroid cancer accounting for only about 3-10% of all differentiated thyroid cancers. These neoplasms are considered a variant of follicular carcinoma of the thyroid and are referred to as follicular carcinoma, oxyphilic type.</description>
        <dbReference type="MIM" id="607464"/>
    </disease>
    <text>Disease susceptibility is associated with variants affecting the gene represented in this entry.</text>
</comment>
<comment type="disease" evidence="12">
    <disease id="DI-05424">
        <name>Mitochondrial complex I deficiency, nuclear type 28</name>
        <acronym>MC1DN28</acronym>
        <description>A form of mitochondrial complex I deficiency, the most common biochemical signature of mitochondrial disorders, a group of highly heterogeneous conditions characterized by defective oxidative phosphorylation, which collectively affects 1 in 5-10000 live births. Clinical disorders have variable severity, ranging from lethal neonatal disease to adult-onset neurodegenerative disorders. Phenotypes include macrocephaly with progressive leukodystrophy, non-specific encephalopathy, cardiomyopathy, myopathy, liver disease, Leigh syndrome, Leber hereditary optic neuropathy, and some forms of Parkinson disease. MC1DN28 transmission pattern is consistent with autosomal recessive inheritance.</description>
        <dbReference type="MIM" id="618249"/>
    </disease>
    <text>The disease may be caused by variants affecting the gene represented in this entry.</text>
</comment>
<comment type="similarity">
    <text evidence="15">Belongs to the complex I NDUFA13 subunit family.</text>
</comment>
<comment type="sequence caution" evidence="15">
    <conflict type="erroneous initiation">
        <sequence resource="EMBL-CDS" id="AAD27748"/>
    </conflict>
</comment>
<comment type="sequence caution" evidence="15">
    <conflict type="erroneous initiation">
        <sequence resource="EMBL-CDS" id="AAG44670"/>
    </conflict>
</comment>
<comment type="sequence caution" evidence="15">
    <conflict type="erroneous initiation">
        <sequence resource="EMBL-CDS" id="AAH00589"/>
    </conflict>
</comment>